<proteinExistence type="inferred from homology"/>
<feature type="chain" id="PRO_1000144755" description="Hydroxyacylglutathione hydrolase">
    <location>
        <begin position="1"/>
        <end position="257"/>
    </location>
</feature>
<feature type="binding site" evidence="1">
    <location>
        <position position="54"/>
    </location>
    <ligand>
        <name>Zn(2+)</name>
        <dbReference type="ChEBI" id="CHEBI:29105"/>
        <label>1</label>
    </ligand>
</feature>
<feature type="binding site" evidence="1">
    <location>
        <position position="56"/>
    </location>
    <ligand>
        <name>Zn(2+)</name>
        <dbReference type="ChEBI" id="CHEBI:29105"/>
        <label>1</label>
    </ligand>
</feature>
<feature type="binding site" evidence="1">
    <location>
        <position position="58"/>
    </location>
    <ligand>
        <name>Zn(2+)</name>
        <dbReference type="ChEBI" id="CHEBI:29105"/>
        <label>2</label>
    </ligand>
</feature>
<feature type="binding site" evidence="1">
    <location>
        <position position="59"/>
    </location>
    <ligand>
        <name>Zn(2+)</name>
        <dbReference type="ChEBI" id="CHEBI:29105"/>
        <label>2</label>
    </ligand>
</feature>
<feature type="binding site" evidence="1">
    <location>
        <position position="113"/>
    </location>
    <ligand>
        <name>Zn(2+)</name>
        <dbReference type="ChEBI" id="CHEBI:29105"/>
        <label>1</label>
    </ligand>
</feature>
<feature type="binding site" evidence="1">
    <location>
        <position position="137"/>
    </location>
    <ligand>
        <name>Zn(2+)</name>
        <dbReference type="ChEBI" id="CHEBI:29105"/>
        <label>1</label>
    </ligand>
</feature>
<feature type="binding site" evidence="1">
    <location>
        <position position="137"/>
    </location>
    <ligand>
        <name>Zn(2+)</name>
        <dbReference type="ChEBI" id="CHEBI:29105"/>
        <label>2</label>
    </ligand>
</feature>
<feature type="binding site" evidence="1">
    <location>
        <position position="175"/>
    </location>
    <ligand>
        <name>Zn(2+)</name>
        <dbReference type="ChEBI" id="CHEBI:29105"/>
        <label>2</label>
    </ligand>
</feature>
<organism>
    <name type="scientific">Gloeothece citriformis (strain PCC 7424)</name>
    <name type="common">Cyanothece sp. (strain PCC 7424)</name>
    <dbReference type="NCBI Taxonomy" id="65393"/>
    <lineage>
        <taxon>Bacteria</taxon>
        <taxon>Bacillati</taxon>
        <taxon>Cyanobacteriota</taxon>
        <taxon>Cyanophyceae</taxon>
        <taxon>Oscillatoriophycideae</taxon>
        <taxon>Chroococcales</taxon>
        <taxon>Aphanothecaceae</taxon>
        <taxon>Gloeothece</taxon>
        <taxon>Gloeothece citriformis</taxon>
    </lineage>
</organism>
<protein>
    <recommendedName>
        <fullName evidence="1">Hydroxyacylglutathione hydrolase</fullName>
        <ecNumber evidence="1">3.1.2.6</ecNumber>
    </recommendedName>
    <alternativeName>
        <fullName evidence="1">Glyoxalase II</fullName>
        <shortName evidence="1">Glx II</shortName>
    </alternativeName>
</protein>
<comment type="function">
    <text evidence="1">Thiolesterase that catalyzes the hydrolysis of S-D-lactoyl-glutathione to form glutathione and D-lactic acid.</text>
</comment>
<comment type="catalytic activity">
    <reaction evidence="1">
        <text>an S-(2-hydroxyacyl)glutathione + H2O = a 2-hydroxy carboxylate + glutathione + H(+)</text>
        <dbReference type="Rhea" id="RHEA:21864"/>
        <dbReference type="ChEBI" id="CHEBI:15377"/>
        <dbReference type="ChEBI" id="CHEBI:15378"/>
        <dbReference type="ChEBI" id="CHEBI:57925"/>
        <dbReference type="ChEBI" id="CHEBI:58896"/>
        <dbReference type="ChEBI" id="CHEBI:71261"/>
        <dbReference type="EC" id="3.1.2.6"/>
    </reaction>
</comment>
<comment type="cofactor">
    <cofactor evidence="1">
        <name>Zn(2+)</name>
        <dbReference type="ChEBI" id="CHEBI:29105"/>
    </cofactor>
    <text evidence="1">Binds 2 Zn(2+) ions per subunit.</text>
</comment>
<comment type="pathway">
    <text evidence="1">Secondary metabolite metabolism; methylglyoxal degradation; (R)-lactate from methylglyoxal: step 2/2.</text>
</comment>
<comment type="subunit">
    <text evidence="1">Monomer.</text>
</comment>
<comment type="similarity">
    <text evidence="1">Belongs to the metallo-beta-lactamase superfamily. Glyoxalase II family.</text>
</comment>
<gene>
    <name evidence="1" type="primary">gloB</name>
    <name type="ordered locus">PCC7424_4875</name>
</gene>
<sequence>MKIFRLPALSDNYIFLLHDPQRNIAAVVDPAEPEPVLTCLKKLGAELVTIFNTHHHGDHVGANRALIEHFPNLTVYGGEEDRGRIPGQEVFLKEGDRVQFGDRSGEVFFVPGHTRAHIAYYFPPQGEEETGELFCGDTIFAGGCGRLFEGTPAQMVNSLSKLRALPDNTRIWCAHEYTLNNLKFALTVEPENIDLQNRFSDVKIARSEGEATVPSLLGIEKLTNPFLRWDTQAIKSAMGSQDSVQVFGRLRGKKDNF</sequence>
<reference key="1">
    <citation type="journal article" date="2011" name="MBio">
        <title>Novel metabolic attributes of the genus Cyanothece, comprising a group of unicellular nitrogen-fixing Cyanobacteria.</title>
        <authorList>
            <person name="Bandyopadhyay A."/>
            <person name="Elvitigala T."/>
            <person name="Welsh E."/>
            <person name="Stockel J."/>
            <person name="Liberton M."/>
            <person name="Min H."/>
            <person name="Sherman L.A."/>
            <person name="Pakrasi H.B."/>
        </authorList>
    </citation>
    <scope>NUCLEOTIDE SEQUENCE [LARGE SCALE GENOMIC DNA]</scope>
    <source>
        <strain>PCC 7424</strain>
    </source>
</reference>
<accession>B7KEB4</accession>
<dbReference type="EC" id="3.1.2.6" evidence="1"/>
<dbReference type="EMBL" id="CP001291">
    <property type="protein sequence ID" value="ACK73232.1"/>
    <property type="molecule type" value="Genomic_DNA"/>
</dbReference>
<dbReference type="RefSeq" id="WP_015956814.1">
    <property type="nucleotide sequence ID" value="NC_011729.1"/>
</dbReference>
<dbReference type="SMR" id="B7KEB4"/>
<dbReference type="STRING" id="65393.PCC7424_4875"/>
<dbReference type="KEGG" id="cyc:PCC7424_4875"/>
<dbReference type="eggNOG" id="COG0491">
    <property type="taxonomic scope" value="Bacteria"/>
</dbReference>
<dbReference type="HOGENOM" id="CLU_030571_4_1_3"/>
<dbReference type="OrthoDB" id="9802897at2"/>
<dbReference type="UniPathway" id="UPA00619">
    <property type="reaction ID" value="UER00676"/>
</dbReference>
<dbReference type="Proteomes" id="UP000002384">
    <property type="component" value="Chromosome"/>
</dbReference>
<dbReference type="GO" id="GO:0004416">
    <property type="term" value="F:hydroxyacylglutathione hydrolase activity"/>
    <property type="evidence" value="ECO:0007669"/>
    <property type="project" value="UniProtKB-UniRule"/>
</dbReference>
<dbReference type="GO" id="GO:0046872">
    <property type="term" value="F:metal ion binding"/>
    <property type="evidence" value="ECO:0007669"/>
    <property type="project" value="UniProtKB-KW"/>
</dbReference>
<dbReference type="GO" id="GO:0019243">
    <property type="term" value="P:methylglyoxal catabolic process to D-lactate via S-lactoyl-glutathione"/>
    <property type="evidence" value="ECO:0007669"/>
    <property type="project" value="InterPro"/>
</dbReference>
<dbReference type="CDD" id="cd07723">
    <property type="entry name" value="hydroxyacylglutathione_hydrolase_MBL-fold"/>
    <property type="match status" value="1"/>
</dbReference>
<dbReference type="Gene3D" id="3.60.15.10">
    <property type="entry name" value="Ribonuclease Z/Hydroxyacylglutathione hydrolase-like"/>
    <property type="match status" value="1"/>
</dbReference>
<dbReference type="HAMAP" id="MF_01374">
    <property type="entry name" value="Glyoxalase_2"/>
    <property type="match status" value="1"/>
</dbReference>
<dbReference type="InterPro" id="IPR035680">
    <property type="entry name" value="Clx_II_MBL"/>
</dbReference>
<dbReference type="InterPro" id="IPR050110">
    <property type="entry name" value="Glyoxalase_II_hydrolase"/>
</dbReference>
<dbReference type="InterPro" id="IPR032282">
    <property type="entry name" value="HAGH_C"/>
</dbReference>
<dbReference type="InterPro" id="IPR017782">
    <property type="entry name" value="Hydroxyacylglutathione_Hdrlase"/>
</dbReference>
<dbReference type="InterPro" id="IPR001279">
    <property type="entry name" value="Metallo-B-lactamas"/>
</dbReference>
<dbReference type="InterPro" id="IPR036866">
    <property type="entry name" value="RibonucZ/Hydroxyglut_hydro"/>
</dbReference>
<dbReference type="NCBIfam" id="TIGR03413">
    <property type="entry name" value="GSH_gloB"/>
    <property type="match status" value="1"/>
</dbReference>
<dbReference type="PANTHER" id="PTHR43705">
    <property type="entry name" value="HYDROXYACYLGLUTATHIONE HYDROLASE"/>
    <property type="match status" value="1"/>
</dbReference>
<dbReference type="PANTHER" id="PTHR43705:SF1">
    <property type="entry name" value="HYDROXYACYLGLUTATHIONE HYDROLASE GLOB"/>
    <property type="match status" value="1"/>
</dbReference>
<dbReference type="Pfam" id="PF16123">
    <property type="entry name" value="HAGH_C"/>
    <property type="match status" value="1"/>
</dbReference>
<dbReference type="Pfam" id="PF00753">
    <property type="entry name" value="Lactamase_B"/>
    <property type="match status" value="1"/>
</dbReference>
<dbReference type="PIRSF" id="PIRSF005457">
    <property type="entry name" value="Glx"/>
    <property type="match status" value="1"/>
</dbReference>
<dbReference type="SMART" id="SM00849">
    <property type="entry name" value="Lactamase_B"/>
    <property type="match status" value="1"/>
</dbReference>
<dbReference type="SUPFAM" id="SSF56281">
    <property type="entry name" value="Metallo-hydrolase/oxidoreductase"/>
    <property type="match status" value="1"/>
</dbReference>
<evidence type="ECO:0000255" key="1">
    <source>
        <dbReference type="HAMAP-Rule" id="MF_01374"/>
    </source>
</evidence>
<keyword id="KW-0378">Hydrolase</keyword>
<keyword id="KW-0479">Metal-binding</keyword>
<keyword id="KW-1185">Reference proteome</keyword>
<keyword id="KW-0862">Zinc</keyword>
<name>GLO2_GLOC7</name>